<feature type="chain" id="PRO_0000121286" description="Ras-related protein Rab7">
    <location>
        <begin position="1"/>
        <end position="206"/>
    </location>
</feature>
<feature type="binding site" evidence="1">
    <location>
        <begin position="15"/>
        <end position="22"/>
    </location>
    <ligand>
        <name>GTP</name>
        <dbReference type="ChEBI" id="CHEBI:37565"/>
    </ligand>
</feature>
<feature type="binding site" evidence="1">
    <location>
        <begin position="63"/>
        <end position="67"/>
    </location>
    <ligand>
        <name>GTP</name>
        <dbReference type="ChEBI" id="CHEBI:37565"/>
    </ligand>
</feature>
<feature type="binding site" evidence="1">
    <location>
        <begin position="125"/>
        <end position="128"/>
    </location>
    <ligand>
        <name>GTP</name>
        <dbReference type="ChEBI" id="CHEBI:37565"/>
    </ligand>
</feature>
<feature type="modified residue" description="Cysteine methyl ester" evidence="1">
    <location>
        <position position="206"/>
    </location>
</feature>
<feature type="lipid moiety-binding region" description="S-geranylgeranyl cysteine" evidence="1">
    <location>
        <position position="204"/>
    </location>
</feature>
<feature type="lipid moiety-binding region" description="S-geranylgeranyl cysteine" evidence="1">
    <location>
        <position position="206"/>
    </location>
</feature>
<name>RAB7_SOYBN</name>
<reference key="1">
    <citation type="journal article" date="1993" name="EMBO J.">
        <title>Roles of plant homologs of Rab1p and Rab7p in the biogenesis of the peribacteroid membrane, a subcellular compartment formed de novo during root nodule symbiosis.</title>
        <authorList>
            <person name="Cheon C.I."/>
            <person name="Lee N.G."/>
            <person name="Siddique A.B.M."/>
            <person name="Bal A.K."/>
            <person name="Verma D.P.S."/>
        </authorList>
    </citation>
    <scope>NUCLEOTIDE SEQUENCE [MRNA]</scope>
    <source>
        <strain>cv. Prize</strain>
        <tissue>Root nodule</tissue>
    </source>
</reference>
<proteinExistence type="evidence at transcript level"/>
<protein>
    <recommendedName>
        <fullName>Ras-related protein Rab7</fullName>
    </recommendedName>
</protein>
<comment type="function">
    <text evidence="1">Protein transport. Probably involved in vesicular traffic (By similarity).</text>
</comment>
<comment type="subcellular location">
    <subcellularLocation>
        <location evidence="2">Cell membrane</location>
        <topology evidence="2">Lipid-anchor</topology>
        <orientation evidence="2">Cytoplasmic side</orientation>
    </subcellularLocation>
</comment>
<comment type="similarity">
    <text evidence="2">Belongs to the small GTPase superfamily. Rab family.</text>
</comment>
<dbReference type="EMBL" id="L14930">
    <property type="protein sequence ID" value="AAA34004.1"/>
    <property type="molecule type" value="mRNA"/>
</dbReference>
<dbReference type="PIR" id="S39566">
    <property type="entry name" value="S39566"/>
</dbReference>
<dbReference type="RefSeq" id="NP_001241382.1">
    <property type="nucleotide sequence ID" value="NM_001254453.2"/>
</dbReference>
<dbReference type="SMR" id="Q43463"/>
<dbReference type="FunCoup" id="Q43463">
    <property type="interactions" value="6330"/>
</dbReference>
<dbReference type="STRING" id="3847.Q43463"/>
<dbReference type="PaxDb" id="3847-GLYMA20G31150.1"/>
<dbReference type="EnsemblPlants" id="KRG91731">
    <property type="protein sequence ID" value="KRG91731"/>
    <property type="gene ID" value="GLYMA_20G171600"/>
</dbReference>
<dbReference type="GeneID" id="100785104"/>
<dbReference type="Gramene" id="KRG91731">
    <property type="protein sequence ID" value="KRG91731"/>
    <property type="gene ID" value="GLYMA_20G171600"/>
</dbReference>
<dbReference type="KEGG" id="gmx:100785104"/>
<dbReference type="eggNOG" id="KOG0394">
    <property type="taxonomic scope" value="Eukaryota"/>
</dbReference>
<dbReference type="HOGENOM" id="CLU_041217_10_6_1"/>
<dbReference type="InParanoid" id="Q43463"/>
<dbReference type="OMA" id="DCCVIVY"/>
<dbReference type="OrthoDB" id="1436450at2759"/>
<dbReference type="Proteomes" id="UP000008827">
    <property type="component" value="Chromosome 20"/>
</dbReference>
<dbReference type="GO" id="GO:0005886">
    <property type="term" value="C:plasma membrane"/>
    <property type="evidence" value="ECO:0007669"/>
    <property type="project" value="UniProtKB-SubCell"/>
</dbReference>
<dbReference type="GO" id="GO:0005774">
    <property type="term" value="C:vacuolar membrane"/>
    <property type="evidence" value="ECO:0000318"/>
    <property type="project" value="GO_Central"/>
</dbReference>
<dbReference type="GO" id="GO:0005525">
    <property type="term" value="F:GTP binding"/>
    <property type="evidence" value="ECO:0007669"/>
    <property type="project" value="UniProtKB-KW"/>
</dbReference>
<dbReference type="GO" id="GO:0003924">
    <property type="term" value="F:GTPase activity"/>
    <property type="evidence" value="ECO:0007669"/>
    <property type="project" value="InterPro"/>
</dbReference>
<dbReference type="GO" id="GO:0015031">
    <property type="term" value="P:protein transport"/>
    <property type="evidence" value="ECO:0007669"/>
    <property type="project" value="UniProtKB-KW"/>
</dbReference>
<dbReference type="CDD" id="cd01862">
    <property type="entry name" value="Rab7"/>
    <property type="match status" value="1"/>
</dbReference>
<dbReference type="FunFam" id="3.40.50.300:FF:000295">
    <property type="entry name" value="Ras-related protein Rab7"/>
    <property type="match status" value="1"/>
</dbReference>
<dbReference type="Gene3D" id="3.40.50.300">
    <property type="entry name" value="P-loop containing nucleotide triphosphate hydrolases"/>
    <property type="match status" value="1"/>
</dbReference>
<dbReference type="InterPro" id="IPR027417">
    <property type="entry name" value="P-loop_NTPase"/>
</dbReference>
<dbReference type="InterPro" id="IPR005225">
    <property type="entry name" value="Small_GTP-bd"/>
</dbReference>
<dbReference type="InterPro" id="IPR001806">
    <property type="entry name" value="Small_GTPase"/>
</dbReference>
<dbReference type="NCBIfam" id="TIGR00231">
    <property type="entry name" value="small_GTP"/>
    <property type="match status" value="1"/>
</dbReference>
<dbReference type="PANTHER" id="PTHR47981">
    <property type="entry name" value="RAB FAMILY"/>
    <property type="match status" value="1"/>
</dbReference>
<dbReference type="PANTHER" id="PTHR47981:SF2">
    <property type="entry name" value="RAS-RELATED PROTEIN RABG3B"/>
    <property type="match status" value="1"/>
</dbReference>
<dbReference type="Pfam" id="PF00071">
    <property type="entry name" value="Ras"/>
    <property type="match status" value="1"/>
</dbReference>
<dbReference type="PRINTS" id="PR00449">
    <property type="entry name" value="RASTRNSFRMNG"/>
</dbReference>
<dbReference type="SMART" id="SM00175">
    <property type="entry name" value="RAB"/>
    <property type="match status" value="1"/>
</dbReference>
<dbReference type="SMART" id="SM00176">
    <property type="entry name" value="RAN"/>
    <property type="match status" value="1"/>
</dbReference>
<dbReference type="SMART" id="SM00173">
    <property type="entry name" value="RAS"/>
    <property type="match status" value="1"/>
</dbReference>
<dbReference type="SMART" id="SM00174">
    <property type="entry name" value="RHO"/>
    <property type="match status" value="1"/>
</dbReference>
<dbReference type="SUPFAM" id="SSF52540">
    <property type="entry name" value="P-loop containing nucleoside triphosphate hydrolases"/>
    <property type="match status" value="1"/>
</dbReference>
<dbReference type="PROSITE" id="PS51419">
    <property type="entry name" value="RAB"/>
    <property type="match status" value="1"/>
</dbReference>
<accession>Q43463</accession>
<evidence type="ECO:0000250" key="1"/>
<evidence type="ECO:0000305" key="2"/>
<organism>
    <name type="scientific">Glycine max</name>
    <name type="common">Soybean</name>
    <name type="synonym">Glycine hispida</name>
    <dbReference type="NCBI Taxonomy" id="3847"/>
    <lineage>
        <taxon>Eukaryota</taxon>
        <taxon>Viridiplantae</taxon>
        <taxon>Streptophyta</taxon>
        <taxon>Embryophyta</taxon>
        <taxon>Tracheophyta</taxon>
        <taxon>Spermatophyta</taxon>
        <taxon>Magnoliopsida</taxon>
        <taxon>eudicotyledons</taxon>
        <taxon>Gunneridae</taxon>
        <taxon>Pentapetalae</taxon>
        <taxon>rosids</taxon>
        <taxon>fabids</taxon>
        <taxon>Fabales</taxon>
        <taxon>Fabaceae</taxon>
        <taxon>Papilionoideae</taxon>
        <taxon>50 kb inversion clade</taxon>
        <taxon>NPAAA clade</taxon>
        <taxon>indigoferoid/millettioid clade</taxon>
        <taxon>Phaseoleae</taxon>
        <taxon>Glycine</taxon>
        <taxon>Glycine subgen. Soja</taxon>
    </lineage>
</organism>
<sequence>MSLRRRTLLKVIVLGDSGVGKTSLMNQYVHKKFSQQYKATIGADFVTKELQIDDRLVTLQIWDTAGQERFQSLGVAFYRGADCCVLVYDVNVMKSFDTLENWHEEFLKQANPPDPRAFPFILLGNKIDIDGGNSRVVSEKKAKDWCAAKGNIPYFETSAKEDYNVDAAFLCIAKAALANEHEQDIYFQGIPEAAVPENEQRSGCAC</sequence>
<keyword id="KW-1003">Cell membrane</keyword>
<keyword id="KW-0342">GTP-binding</keyword>
<keyword id="KW-0449">Lipoprotein</keyword>
<keyword id="KW-0472">Membrane</keyword>
<keyword id="KW-0488">Methylation</keyword>
<keyword id="KW-0547">Nucleotide-binding</keyword>
<keyword id="KW-0636">Prenylation</keyword>
<keyword id="KW-0653">Protein transport</keyword>
<keyword id="KW-1185">Reference proteome</keyword>
<keyword id="KW-0813">Transport</keyword>